<accession>Q6P7Y3</accession>
<reference key="1">
    <citation type="submission" date="2003-11" db="EMBL/GenBank/DDBJ databases">
        <authorList>
            <consortium name="NIH - Zebrafish Gene Collection (ZGC) project"/>
        </authorList>
    </citation>
    <scope>NUCLEOTIDE SEQUENCE [LARGE SCALE MRNA]</scope>
    <source>
        <strain>AB</strain>
    </source>
</reference>
<sequence length="501" mass="59477">MAGSQQQQQQQAVSKPTGGKHGNNLPLWGNEKTMNLNPMILTNVLSSPYFKVQLYELKTYHEVVDEIYFKVNHVEPWEKGSRKTAGQTGMCGGVRGVGTGGIVSTAFCLLYKLFTLKLTRKQVMGLITHSDSPDIRALGFMYIRYTQPPPDLVDWYDEFLDDEEELDVKAGGGCVMTVGEMLRSFLTKLEWFSTLFPRIPVPVQKAIDQHMKSRPRKPPQKDEQEEEEEEATAAPAADTGRHGDKRRSRTPRRSPSPRKSQNRSRSRSHHRERHGASFDYELERERDRQRKEREGKDRDRDRDRDRERDRERDRDRRRSRTPDRNAERRRSRSRERRRSRSTSRDKRTERKDRDKDREAESERERSRKKDREHHKDRERSKDKRSKGEGEERRHKDDKEEKKHREEKRSKRSRSRSRDRKHKAERSSKKRSRSGSRSRQEAGEEKNRKRERSHSKDRQHKRSRSKERSHRRESSNERIHARQERPSSESGERTNSVRADSP</sequence>
<evidence type="ECO:0000255" key="1"/>
<evidence type="ECO:0000256" key="2">
    <source>
        <dbReference type="SAM" id="MobiDB-lite"/>
    </source>
</evidence>
<evidence type="ECO:0000305" key="3"/>
<feature type="chain" id="PRO_0000287238" description="Pre-mRNA-splicing factor 38B">
    <location>
        <begin position="1"/>
        <end position="501"/>
    </location>
</feature>
<feature type="region of interest" description="Disordered" evidence="2">
    <location>
        <begin position="1"/>
        <end position="28"/>
    </location>
</feature>
<feature type="region of interest" description="Disordered" evidence="2">
    <location>
        <begin position="208"/>
        <end position="501"/>
    </location>
</feature>
<feature type="coiled-coil region" evidence="1">
    <location>
        <begin position="281"/>
        <end position="302"/>
    </location>
</feature>
<feature type="compositionally biased region" description="Low complexity" evidence="2">
    <location>
        <begin position="1"/>
        <end position="11"/>
    </location>
</feature>
<feature type="compositionally biased region" description="Basic residues" evidence="2">
    <location>
        <begin position="243"/>
        <end position="273"/>
    </location>
</feature>
<feature type="compositionally biased region" description="Basic and acidic residues" evidence="2">
    <location>
        <begin position="281"/>
        <end position="328"/>
    </location>
</feature>
<feature type="compositionally biased region" description="Basic residues" evidence="2">
    <location>
        <begin position="329"/>
        <end position="341"/>
    </location>
</feature>
<feature type="compositionally biased region" description="Basic and acidic residues" evidence="2">
    <location>
        <begin position="342"/>
        <end position="408"/>
    </location>
</feature>
<feature type="compositionally biased region" description="Basic residues" evidence="2">
    <location>
        <begin position="409"/>
        <end position="435"/>
    </location>
</feature>
<feature type="compositionally biased region" description="Basic and acidic residues" evidence="2">
    <location>
        <begin position="437"/>
        <end position="447"/>
    </location>
</feature>
<feature type="compositionally biased region" description="Basic residues" evidence="2">
    <location>
        <begin position="448"/>
        <end position="468"/>
    </location>
</feature>
<feature type="compositionally biased region" description="Basic and acidic residues" evidence="2">
    <location>
        <begin position="469"/>
        <end position="491"/>
    </location>
</feature>
<feature type="compositionally biased region" description="Polar residues" evidence="2">
    <location>
        <begin position="492"/>
        <end position="501"/>
    </location>
</feature>
<gene>
    <name type="primary">prpf38b</name>
</gene>
<proteinExistence type="evidence at transcript level"/>
<keyword id="KW-0175">Coiled coil</keyword>
<keyword id="KW-0507">mRNA processing</keyword>
<keyword id="KW-0508">mRNA splicing</keyword>
<keyword id="KW-0539">Nucleus</keyword>
<keyword id="KW-1185">Reference proteome</keyword>
<keyword id="KW-0747">Spliceosome</keyword>
<protein>
    <recommendedName>
        <fullName>Pre-mRNA-splicing factor 38B</fullName>
    </recommendedName>
</protein>
<comment type="function">
    <text evidence="3">May be required for pre-mRNA splicing.</text>
</comment>
<comment type="subcellular location">
    <subcellularLocation>
        <location evidence="3">Nucleus</location>
    </subcellularLocation>
</comment>
<comment type="similarity">
    <text evidence="3">Belongs to the PRP38 family.</text>
</comment>
<organism>
    <name type="scientific">Danio rerio</name>
    <name type="common">Zebrafish</name>
    <name type="synonym">Brachydanio rerio</name>
    <dbReference type="NCBI Taxonomy" id="7955"/>
    <lineage>
        <taxon>Eukaryota</taxon>
        <taxon>Metazoa</taxon>
        <taxon>Chordata</taxon>
        <taxon>Craniata</taxon>
        <taxon>Vertebrata</taxon>
        <taxon>Euteleostomi</taxon>
        <taxon>Actinopterygii</taxon>
        <taxon>Neopterygii</taxon>
        <taxon>Teleostei</taxon>
        <taxon>Ostariophysi</taxon>
        <taxon>Cypriniformes</taxon>
        <taxon>Danionidae</taxon>
        <taxon>Danioninae</taxon>
        <taxon>Danio</taxon>
    </lineage>
</organism>
<name>PR38B_DANRE</name>
<dbReference type="EMBL" id="BC061448">
    <property type="protein sequence ID" value="AAH61448.1"/>
    <property type="molecule type" value="mRNA"/>
</dbReference>
<dbReference type="RefSeq" id="NP_998654.1">
    <property type="nucleotide sequence ID" value="NM_213489.1"/>
</dbReference>
<dbReference type="SMR" id="Q6P7Y3"/>
<dbReference type="STRING" id="7955.ENSDARP00000069565"/>
<dbReference type="PaxDb" id="7955-ENSDARP00000069565"/>
<dbReference type="GeneID" id="406810"/>
<dbReference type="KEGG" id="dre:406810"/>
<dbReference type="AGR" id="ZFIN:ZDB-GENE-040426-2878"/>
<dbReference type="CTD" id="55119"/>
<dbReference type="ZFIN" id="ZDB-GENE-040426-2878">
    <property type="gene designation" value="prpf38b"/>
</dbReference>
<dbReference type="eggNOG" id="KOG2888">
    <property type="taxonomic scope" value="Eukaryota"/>
</dbReference>
<dbReference type="InParanoid" id="Q6P7Y3"/>
<dbReference type="OrthoDB" id="3881at2759"/>
<dbReference type="PRO" id="PR:Q6P7Y3"/>
<dbReference type="Proteomes" id="UP000000437">
    <property type="component" value="Chromosome 2"/>
</dbReference>
<dbReference type="GO" id="GO:0071011">
    <property type="term" value="C:precatalytic spliceosome"/>
    <property type="evidence" value="ECO:0000318"/>
    <property type="project" value="GO_Central"/>
</dbReference>
<dbReference type="GO" id="GO:0006397">
    <property type="term" value="P:mRNA processing"/>
    <property type="evidence" value="ECO:0007669"/>
    <property type="project" value="UniProtKB-KW"/>
</dbReference>
<dbReference type="GO" id="GO:0008380">
    <property type="term" value="P:RNA splicing"/>
    <property type="evidence" value="ECO:0007669"/>
    <property type="project" value="UniProtKB-KW"/>
</dbReference>
<dbReference type="InterPro" id="IPR005037">
    <property type="entry name" value="PRP38"/>
</dbReference>
<dbReference type="PANTHER" id="PTHR23142">
    <property type="entry name" value="PRE-MRNA-SPLICING FACTOR 38A-RELATED"/>
    <property type="match status" value="1"/>
</dbReference>
<dbReference type="Pfam" id="PF03371">
    <property type="entry name" value="PRP38"/>
    <property type="match status" value="1"/>
</dbReference>